<accession>Q6DF48</accession>
<dbReference type="EMBL" id="CR926335">
    <property type="protein sequence ID" value="CAJ81818.1"/>
    <property type="molecule type" value="mRNA"/>
</dbReference>
<dbReference type="EMBL" id="BC076895">
    <property type="protein sequence ID" value="AAH76895.1"/>
    <property type="molecule type" value="mRNA"/>
</dbReference>
<dbReference type="RefSeq" id="NP_001006828.1">
    <property type="nucleotide sequence ID" value="NM_001006827.1"/>
</dbReference>
<dbReference type="SMR" id="Q6DF48"/>
<dbReference type="FunCoup" id="Q6DF48">
    <property type="interactions" value="2089"/>
</dbReference>
<dbReference type="STRING" id="8364.ENSXETP00000050841"/>
<dbReference type="PaxDb" id="8364-ENSXETP00000049360"/>
<dbReference type="DNASU" id="448562"/>
<dbReference type="GeneID" id="448562"/>
<dbReference type="KEGG" id="xtr:448562"/>
<dbReference type="AGR" id="Xenbase:XB-GENE-1006016"/>
<dbReference type="CTD" id="10241"/>
<dbReference type="Xenbase" id="XB-GENE-1006016">
    <property type="gene designation" value="calcoco2"/>
</dbReference>
<dbReference type="eggNOG" id="ENOG502QT1M">
    <property type="taxonomic scope" value="Eukaryota"/>
</dbReference>
<dbReference type="HOGENOM" id="CLU_021315_0_0_1"/>
<dbReference type="InParanoid" id="Q6DF48"/>
<dbReference type="OMA" id="PFCFRNP"/>
<dbReference type="OrthoDB" id="10015001at2759"/>
<dbReference type="PhylomeDB" id="Q6DF48"/>
<dbReference type="TreeFam" id="TF329501"/>
<dbReference type="Proteomes" id="UP000008143">
    <property type="component" value="Chromosome 10"/>
</dbReference>
<dbReference type="Bgee" id="ENSXETG00000022806">
    <property type="expression patterns" value="Expressed in heart and 15 other cell types or tissues"/>
</dbReference>
<dbReference type="GO" id="GO:0005776">
    <property type="term" value="C:autophagosome"/>
    <property type="evidence" value="ECO:0000250"/>
    <property type="project" value="GO_Central"/>
</dbReference>
<dbReference type="GO" id="GO:0000421">
    <property type="term" value="C:autophagosome membrane"/>
    <property type="evidence" value="ECO:0007669"/>
    <property type="project" value="UniProtKB-SubCell"/>
</dbReference>
<dbReference type="GO" id="GO:0031410">
    <property type="term" value="C:cytoplasmic vesicle"/>
    <property type="evidence" value="ECO:0007669"/>
    <property type="project" value="UniProtKB-KW"/>
</dbReference>
<dbReference type="GO" id="GO:0005856">
    <property type="term" value="C:cytoskeleton"/>
    <property type="evidence" value="ECO:0007669"/>
    <property type="project" value="UniProtKB-SubCell"/>
</dbReference>
<dbReference type="GO" id="GO:0048471">
    <property type="term" value="C:perinuclear region of cytoplasm"/>
    <property type="evidence" value="ECO:0007669"/>
    <property type="project" value="UniProtKB-SubCell"/>
</dbReference>
<dbReference type="GO" id="GO:0008270">
    <property type="term" value="F:zinc ion binding"/>
    <property type="evidence" value="ECO:0007669"/>
    <property type="project" value="UniProtKB-KW"/>
</dbReference>
<dbReference type="GO" id="GO:1901098">
    <property type="term" value="P:positive regulation of autophagosome maturation"/>
    <property type="evidence" value="ECO:0000250"/>
    <property type="project" value="GO_Central"/>
</dbReference>
<dbReference type="GO" id="GO:0098792">
    <property type="term" value="P:xenophagy"/>
    <property type="evidence" value="ECO:0000250"/>
    <property type="project" value="GO_Central"/>
</dbReference>
<dbReference type="FunFam" id="2.60.40.2840:FF:000002">
    <property type="entry name" value="Tax1-binding protein 1 isoform 2"/>
    <property type="match status" value="1"/>
</dbReference>
<dbReference type="Gene3D" id="2.60.40.2840">
    <property type="match status" value="1"/>
</dbReference>
<dbReference type="InterPro" id="IPR041641">
    <property type="entry name" value="CALCOCO1/2_Zn_UBZ1"/>
</dbReference>
<dbReference type="InterPro" id="IPR041611">
    <property type="entry name" value="SKICH"/>
</dbReference>
<dbReference type="InterPro" id="IPR051002">
    <property type="entry name" value="UBA_autophagy_assoc_protein"/>
</dbReference>
<dbReference type="InterPro" id="IPR013087">
    <property type="entry name" value="Znf_C2H2_type"/>
</dbReference>
<dbReference type="PANTHER" id="PTHR31915:SF14">
    <property type="entry name" value="CALCIUM-BINDING AND COILED-COIL DOMAIN-CONTAINING PROTEIN 2"/>
    <property type="match status" value="1"/>
</dbReference>
<dbReference type="PANTHER" id="PTHR31915">
    <property type="entry name" value="SKICH DOMAIN-CONTAINING PROTEIN"/>
    <property type="match status" value="1"/>
</dbReference>
<dbReference type="Pfam" id="PF17751">
    <property type="entry name" value="SKICH"/>
    <property type="match status" value="1"/>
</dbReference>
<dbReference type="PROSITE" id="PS51905">
    <property type="entry name" value="ZF_UBZ1"/>
    <property type="match status" value="1"/>
</dbReference>
<reference key="1">
    <citation type="submission" date="2006-10" db="EMBL/GenBank/DDBJ databases">
        <authorList>
            <consortium name="Sanger Xenopus tropicalis EST/cDNA project"/>
        </authorList>
    </citation>
    <scope>NUCLEOTIDE SEQUENCE [LARGE SCALE MRNA]</scope>
    <source>
        <tissue>Egg</tissue>
    </source>
</reference>
<reference key="2">
    <citation type="submission" date="2004-07" db="EMBL/GenBank/DDBJ databases">
        <authorList>
            <consortium name="NIH - Xenopus Gene Collection (XGC) project"/>
        </authorList>
    </citation>
    <scope>NUCLEOTIDE SEQUENCE [LARGE SCALE MRNA]</scope>
    <source>
        <tissue>Embryo</tissue>
    </source>
</reference>
<protein>
    <recommendedName>
        <fullName evidence="1">Calcium-binding and coiled-coil domain-containing protein 2</fullName>
    </recommendedName>
</protein>
<name>CACO2_XENTR</name>
<organism>
    <name type="scientific">Xenopus tropicalis</name>
    <name type="common">Western clawed frog</name>
    <name type="synonym">Silurana tropicalis</name>
    <dbReference type="NCBI Taxonomy" id="8364"/>
    <lineage>
        <taxon>Eukaryota</taxon>
        <taxon>Metazoa</taxon>
        <taxon>Chordata</taxon>
        <taxon>Craniata</taxon>
        <taxon>Vertebrata</taxon>
        <taxon>Euteleostomi</taxon>
        <taxon>Amphibia</taxon>
        <taxon>Batrachia</taxon>
        <taxon>Anura</taxon>
        <taxon>Pipoidea</taxon>
        <taxon>Pipidae</taxon>
        <taxon>Xenopodinae</taxon>
        <taxon>Xenopus</taxon>
        <taxon>Silurana</taxon>
    </lineage>
</organism>
<evidence type="ECO:0000250" key="1">
    <source>
        <dbReference type="UniProtKB" id="Q13137"/>
    </source>
</evidence>
<evidence type="ECO:0000255" key="2"/>
<evidence type="ECO:0000255" key="3">
    <source>
        <dbReference type="PROSITE-ProRule" id="PRU01253"/>
    </source>
</evidence>
<evidence type="ECO:0000305" key="4"/>
<gene>
    <name evidence="1" type="primary">calcoco2</name>
    <name type="ORF">TEgg035o03.1</name>
</gene>
<sequence length="470" mass="54948">MASDAPPTSMLQPEERNYSQVVFSRVEQSYVPGIDIICYFTYTSGFHPAKKDWVGIFKVSWKTTREYYTWVSADCEEQGLEKRVTFKAYYLPKESDDYYQFCYVDQKGEVRGVSIPFQLCRKIQDEGEEDILLVTTEEEAQGMKEKQRVLEEKVAALEKDKCTLQDECTQLALEQKNKAALIESLQAQQLECAKKNEELDQQNQELERQLEEEKCKNGSLHLKVVSAEEERERVQNDIRSLQLEQNQLKEENMELHKHTNDMEFSLKKYSEEAKNQEEEVQELKDKLWDAEAKHHLLQVQLQDIQMEKKKDKYSIELLTKEAEKVADLRQNLEKKDKTMETMEKQLAQLQRENATVLRQMEDLSYTLELRKAEISDMQQQRVRDGAEIEHLNRLLTEQSSSTPRNQGLFFQNPYESESLISFANEPQPGEAPGGSSVRHVQMQCPECGSEFENFQVFQDHIFCHDLESTE</sequence>
<proteinExistence type="evidence at transcript level"/>
<feature type="chain" id="PRO_0000312341" description="Calcium-binding and coiled-coil domain-containing protein 2">
    <location>
        <begin position="1"/>
        <end position="470"/>
    </location>
</feature>
<feature type="zinc finger region" description="UBZ1-type" evidence="3">
    <location>
        <begin position="441"/>
        <end position="464"/>
    </location>
</feature>
<feature type="coiled-coil region" evidence="2">
    <location>
        <begin position="132"/>
        <end position="368"/>
    </location>
</feature>
<feature type="short sequence motif" description="CLIR" evidence="1">
    <location>
        <begin position="131"/>
        <end position="134"/>
    </location>
</feature>
<feature type="short sequence motif" description="LIR-like" evidence="1">
    <location>
        <begin position="201"/>
        <end position="204"/>
    </location>
</feature>
<feature type="binding site" evidence="3">
    <location>
        <position position="444"/>
    </location>
    <ligand>
        <name>Zn(2+)</name>
        <dbReference type="ChEBI" id="CHEBI:29105"/>
    </ligand>
</feature>
<feature type="binding site" evidence="3">
    <location>
        <position position="447"/>
    </location>
    <ligand>
        <name>Zn(2+)</name>
        <dbReference type="ChEBI" id="CHEBI:29105"/>
    </ligand>
</feature>
<feature type="binding site" evidence="3">
    <location>
        <position position="460"/>
    </location>
    <ligand>
        <name>Zn(2+)</name>
        <dbReference type="ChEBI" id="CHEBI:29105"/>
    </ligand>
</feature>
<feature type="binding site" evidence="3">
    <location>
        <position position="464"/>
    </location>
    <ligand>
        <name>Zn(2+)</name>
        <dbReference type="ChEBI" id="CHEBI:29105"/>
    </ligand>
</feature>
<comment type="function">
    <text evidence="1">Xenophagy-specific receptor required for autophagy-mediated intracellular bacteria degradation (By similarity). Acts as an effector protein of galectin-sensed membrane damage that restricts the proliferation of infecting pathogens upon entry into the cytosol by targeting galectin-associated bacteria for autophagy (By similarity). Initially orchestrates bacteria targeting to autophagosomes and subsequently ensures pathogen degradation by regulating pathogen-containing autophagosome maturation (By similarity). May play a role in ruffle formation and actin cytoskeleton organization and seems to negatively regulate constitutive secretion (By similarity).</text>
</comment>
<comment type="subcellular location">
    <subcellularLocation>
        <location evidence="1">Cytoplasm</location>
        <location evidence="1">Perinuclear region</location>
    </subcellularLocation>
    <subcellularLocation>
        <location evidence="1">Cytoplasm</location>
        <location evidence="1">Cytoskeleton</location>
    </subcellularLocation>
    <subcellularLocation>
        <location evidence="1">Cytoplasmic vesicle</location>
        <location evidence="1">Autophagosome membrane</location>
        <topology evidence="4">Peripheral membrane protein</topology>
    </subcellularLocation>
</comment>
<comment type="domain">
    <text evidence="1">The CLIR and LIR-like motifs are required for interaction with AT8 family proteins.</text>
</comment>
<comment type="similarity">
    <text evidence="4">Belongs to the CALCOCO family.</text>
</comment>
<keyword id="KW-0072">Autophagy</keyword>
<keyword id="KW-0175">Coiled coil</keyword>
<keyword id="KW-0963">Cytoplasm</keyword>
<keyword id="KW-0968">Cytoplasmic vesicle</keyword>
<keyword id="KW-0206">Cytoskeleton</keyword>
<keyword id="KW-0472">Membrane</keyword>
<keyword id="KW-0479">Metal-binding</keyword>
<keyword id="KW-1185">Reference proteome</keyword>
<keyword id="KW-0862">Zinc</keyword>
<keyword id="KW-0863">Zinc-finger</keyword>